<reference key="1">
    <citation type="journal article" date="2010" name="J. Bacteriol.">
        <title>Genome sequence of the deep-rooted Yersinia pestis strain Angola reveals new insights into the evolution and pangenome of the plague bacterium.</title>
        <authorList>
            <person name="Eppinger M."/>
            <person name="Worsham P.L."/>
            <person name="Nikolich M.P."/>
            <person name="Riley D.R."/>
            <person name="Sebastian Y."/>
            <person name="Mou S."/>
            <person name="Achtman M."/>
            <person name="Lindler L.E."/>
            <person name="Ravel J."/>
        </authorList>
    </citation>
    <scope>NUCLEOTIDE SEQUENCE [LARGE SCALE GENOMIC DNA]</scope>
    <source>
        <strain>Angola</strain>
    </source>
</reference>
<evidence type="ECO:0000255" key="1">
    <source>
        <dbReference type="HAMAP-Rule" id="MF_00460"/>
    </source>
</evidence>
<proteinExistence type="inferred from homology"/>
<organism>
    <name type="scientific">Yersinia pestis bv. Antiqua (strain Angola)</name>
    <dbReference type="NCBI Taxonomy" id="349746"/>
    <lineage>
        <taxon>Bacteria</taxon>
        <taxon>Pseudomonadati</taxon>
        <taxon>Pseudomonadota</taxon>
        <taxon>Gammaproteobacteria</taxon>
        <taxon>Enterobacterales</taxon>
        <taxon>Yersiniaceae</taxon>
        <taxon>Yersinia</taxon>
    </lineage>
</organism>
<accession>A9R2E0</accession>
<dbReference type="EMBL" id="CP000901">
    <property type="protein sequence ID" value="ABX86956.1"/>
    <property type="molecule type" value="Genomic_DNA"/>
</dbReference>
<dbReference type="RefSeq" id="WP_002210716.1">
    <property type="nucleotide sequence ID" value="NZ_CP009935.1"/>
</dbReference>
<dbReference type="SMR" id="A9R2E0"/>
<dbReference type="KEGG" id="ypg:YpAngola_A1374"/>
<dbReference type="PATRIC" id="fig|349746.12.peg.2341"/>
<dbReference type="Gene3D" id="3.10.20.280">
    <property type="entry name" value="RnfH-like"/>
    <property type="match status" value="1"/>
</dbReference>
<dbReference type="HAMAP" id="MF_00460">
    <property type="entry name" value="UPF0125_RnfH"/>
    <property type="match status" value="1"/>
</dbReference>
<dbReference type="InterPro" id="IPR016155">
    <property type="entry name" value="Mopterin_synth/thiamin_S_b"/>
</dbReference>
<dbReference type="InterPro" id="IPR005346">
    <property type="entry name" value="RnfH"/>
</dbReference>
<dbReference type="InterPro" id="IPR037021">
    <property type="entry name" value="RnfH_sf"/>
</dbReference>
<dbReference type="NCBIfam" id="NF002490">
    <property type="entry name" value="PRK01777.1"/>
    <property type="match status" value="1"/>
</dbReference>
<dbReference type="PANTHER" id="PTHR37483">
    <property type="entry name" value="UPF0125 PROTEIN RATB"/>
    <property type="match status" value="1"/>
</dbReference>
<dbReference type="PANTHER" id="PTHR37483:SF1">
    <property type="entry name" value="UPF0125 PROTEIN RATB"/>
    <property type="match status" value="1"/>
</dbReference>
<dbReference type="Pfam" id="PF03658">
    <property type="entry name" value="Ub-RnfH"/>
    <property type="match status" value="1"/>
</dbReference>
<dbReference type="SUPFAM" id="SSF54285">
    <property type="entry name" value="MoaD/ThiS"/>
    <property type="match status" value="1"/>
</dbReference>
<name>RNFH_YERPG</name>
<gene>
    <name evidence="1" type="primary">rnfH</name>
    <name type="ordered locus">YpAngola_A1374</name>
</gene>
<protein>
    <recommendedName>
        <fullName evidence="1">Protein RnfH</fullName>
    </recommendedName>
</protein>
<feature type="chain" id="PRO_1000200199" description="Protein RnfH">
    <location>
        <begin position="1"/>
        <end position="94"/>
    </location>
</feature>
<comment type="similarity">
    <text evidence="1">Belongs to the UPF0125 (RnfH) family.</text>
</comment>
<sequence>MPDIRVEVVYALSERQYLRTVSLVVGSTVEDAIKASGLLELRPDIDLEKNKVGIYSRPVKLGDKLNDGDRVEIYRPLIADPKELRRQRAEQAKK</sequence>